<organism evidence="62">
    <name type="scientific">Drosophila melanogaster</name>
    <name type="common">Fruit fly</name>
    <dbReference type="NCBI Taxonomy" id="7227"/>
    <lineage>
        <taxon>Eukaryota</taxon>
        <taxon>Metazoa</taxon>
        <taxon>Ecdysozoa</taxon>
        <taxon>Arthropoda</taxon>
        <taxon>Hexapoda</taxon>
        <taxon>Insecta</taxon>
        <taxon>Pterygota</taxon>
        <taxon>Neoptera</taxon>
        <taxon>Endopterygota</taxon>
        <taxon>Diptera</taxon>
        <taxon>Brachycera</taxon>
        <taxon>Muscomorpha</taxon>
        <taxon>Ephydroidea</taxon>
        <taxon>Drosophilidae</taxon>
        <taxon>Drosophila</taxon>
        <taxon>Sophophora</taxon>
    </lineage>
</organism>
<evidence type="ECO:0000255" key="1">
    <source>
        <dbReference type="PROSITE-ProRule" id="PRU00142"/>
    </source>
</evidence>
<evidence type="ECO:0000255" key="2">
    <source>
        <dbReference type="PROSITE-ProRule" id="PRU00150"/>
    </source>
</evidence>
<evidence type="ECO:0000256" key="3">
    <source>
        <dbReference type="SAM" id="MobiDB-lite"/>
    </source>
</evidence>
<evidence type="ECO:0000269" key="4">
    <source>
    </source>
</evidence>
<evidence type="ECO:0000269" key="5">
    <source>
    </source>
</evidence>
<evidence type="ECO:0000269" key="6">
    <source>
    </source>
</evidence>
<evidence type="ECO:0000269" key="7">
    <source>
    </source>
</evidence>
<evidence type="ECO:0000269" key="8">
    <source>
    </source>
</evidence>
<evidence type="ECO:0000269" key="9">
    <source>
    </source>
</evidence>
<evidence type="ECO:0000269" key="10">
    <source>
    </source>
</evidence>
<evidence type="ECO:0000269" key="11">
    <source>
    </source>
</evidence>
<evidence type="ECO:0000269" key="12">
    <source>
    </source>
</evidence>
<evidence type="ECO:0000269" key="13">
    <source>
    </source>
</evidence>
<evidence type="ECO:0000269" key="14">
    <source>
    </source>
</evidence>
<evidence type="ECO:0000269" key="15">
    <source>
    </source>
</evidence>
<evidence type="ECO:0000269" key="16">
    <source>
    </source>
</evidence>
<evidence type="ECO:0000269" key="17">
    <source>
    </source>
</evidence>
<evidence type="ECO:0000269" key="18">
    <source>
    </source>
</evidence>
<evidence type="ECO:0000269" key="19">
    <source>
    </source>
</evidence>
<evidence type="ECO:0000269" key="20">
    <source>
    </source>
</evidence>
<evidence type="ECO:0000269" key="21">
    <source>
    </source>
</evidence>
<evidence type="ECO:0000269" key="22">
    <source>
    </source>
</evidence>
<evidence type="ECO:0000269" key="23">
    <source>
    </source>
</evidence>
<evidence type="ECO:0000269" key="24">
    <source>
    </source>
</evidence>
<evidence type="ECO:0000269" key="25">
    <source>
    </source>
</evidence>
<evidence type="ECO:0000269" key="26">
    <source>
    </source>
</evidence>
<evidence type="ECO:0000269" key="27">
    <source>
    </source>
</evidence>
<evidence type="ECO:0000269" key="28">
    <source>
    </source>
</evidence>
<evidence type="ECO:0000269" key="29">
    <source>
    </source>
</evidence>
<evidence type="ECO:0000269" key="30">
    <source>
    </source>
</evidence>
<evidence type="ECO:0000269" key="31">
    <source>
    </source>
</evidence>
<evidence type="ECO:0000269" key="32">
    <source>
    </source>
</evidence>
<evidence type="ECO:0000269" key="33">
    <source>
    </source>
</evidence>
<evidence type="ECO:0000269" key="34">
    <source>
    </source>
</evidence>
<evidence type="ECO:0000269" key="35">
    <source>
    </source>
</evidence>
<evidence type="ECO:0000269" key="36">
    <source>
    </source>
</evidence>
<evidence type="ECO:0000269" key="37">
    <source>
    </source>
</evidence>
<evidence type="ECO:0000269" key="38">
    <source>
    </source>
</evidence>
<evidence type="ECO:0000269" key="39">
    <source>
    </source>
</evidence>
<evidence type="ECO:0000269" key="40">
    <source>
    </source>
</evidence>
<evidence type="ECO:0000269" key="41">
    <source>
    </source>
</evidence>
<evidence type="ECO:0000269" key="42">
    <source ref="7"/>
</evidence>
<evidence type="ECO:0000303" key="43">
    <source>
    </source>
</evidence>
<evidence type="ECO:0000303" key="44">
    <source>
    </source>
</evidence>
<evidence type="ECO:0000303" key="45">
    <source>
    </source>
</evidence>
<evidence type="ECO:0000305" key="46"/>
<evidence type="ECO:0000305" key="47">
    <source>
    </source>
</evidence>
<evidence type="ECO:0000312" key="48">
    <source>
        <dbReference type="EMBL" id="AAD38655.1"/>
    </source>
</evidence>
<evidence type="ECO:0000312" key="49">
    <source>
        <dbReference type="EMBL" id="AAF53046.1"/>
    </source>
</evidence>
<evidence type="ECO:0000312" key="50">
    <source>
        <dbReference type="EMBL" id="AFX62835.1"/>
    </source>
</evidence>
<evidence type="ECO:0000312" key="51">
    <source>
        <dbReference type="EMBL" id="AGA18939.1"/>
    </source>
</evidence>
<evidence type="ECO:0000312" key="52">
    <source>
        <dbReference type="EMBL" id="AGA18940.1"/>
    </source>
</evidence>
<evidence type="ECO:0000312" key="53">
    <source>
        <dbReference type="EMBL" id="AGA18941.1"/>
    </source>
</evidence>
<evidence type="ECO:0000312" key="54">
    <source>
        <dbReference type="EMBL" id="AGA18942.1"/>
    </source>
</evidence>
<evidence type="ECO:0000312" key="55">
    <source>
        <dbReference type="EMBL" id="AGA18943.1"/>
    </source>
</evidence>
<evidence type="ECO:0000312" key="56">
    <source>
        <dbReference type="EMBL" id="AGA18944.1"/>
    </source>
</evidence>
<evidence type="ECO:0000312" key="57">
    <source>
        <dbReference type="EMBL" id="AGA18945.1"/>
    </source>
</evidence>
<evidence type="ECO:0000312" key="58">
    <source>
        <dbReference type="EMBL" id="AGA18946.1"/>
    </source>
</evidence>
<evidence type="ECO:0000312" key="59">
    <source>
        <dbReference type="EMBL" id="CAA64320.1"/>
    </source>
</evidence>
<evidence type="ECO:0000312" key="60">
    <source>
        <dbReference type="FlyBase" id="FBgn0000146"/>
    </source>
</evidence>
<evidence type="ECO:0000312" key="61">
    <source>
        <dbReference type="PDB" id="3NTI"/>
    </source>
</evidence>
<evidence type="ECO:0000312" key="62">
    <source>
        <dbReference type="Proteomes" id="UP000000803"/>
    </source>
</evidence>
<evidence type="ECO:0007744" key="63">
    <source>
        <dbReference type="PDB" id="3NTH"/>
    </source>
</evidence>
<evidence type="ECO:0007744" key="64">
    <source>
        <dbReference type="PDB" id="7CFD"/>
    </source>
</evidence>
<gene>
    <name evidence="60" type="primary">aub</name>
    <name evidence="45 60" type="synonym">sti</name>
    <name evidence="60" type="ORF">CG6137</name>
</gene>
<feature type="chain" id="PRO_0000422915" description="Protein aubergine">
    <location>
        <begin position="1"/>
        <end position="866"/>
    </location>
</feature>
<feature type="domain" description="PAZ" evidence="1">
    <location>
        <begin position="281"/>
        <end position="390"/>
    </location>
</feature>
<feature type="domain" description="Piwi" evidence="2">
    <location>
        <begin position="555"/>
        <end position="852"/>
    </location>
</feature>
<feature type="region of interest" description="Disordered" evidence="3">
    <location>
        <begin position="1"/>
        <end position="61"/>
    </location>
</feature>
<feature type="compositionally biased region" description="Gly residues" evidence="3">
    <location>
        <begin position="46"/>
        <end position="56"/>
    </location>
</feature>
<feature type="modified residue" description="N-acetylmethionine" evidence="24">
    <location>
        <position position="1"/>
    </location>
</feature>
<feature type="modified residue" description="Symmetric dimethylarginine" evidence="24 25 47">
    <location>
        <position position="11"/>
    </location>
</feature>
<feature type="modified residue" description="Symmetric dimethylarginine" evidence="24 25 47">
    <location>
        <position position="13"/>
    </location>
</feature>
<feature type="modified residue" description="Symmetric dimethylarginine" evidence="24 25 47">
    <location>
        <position position="15"/>
    </location>
</feature>
<feature type="modified residue" description="Symmetric dimethylarginine" evidence="47">
    <location>
        <position position="17"/>
    </location>
</feature>
<feature type="splice variant" id="VSP_047356" description="In isoform C." evidence="43">
    <location>
        <begin position="1"/>
        <end position="71"/>
    </location>
</feature>
<feature type="mutagenesis site" description="Lacks symmetric dimethylated arginine modification but does not affect ability to recruit csul/PRMT5. Abrogates interaction with krimp and tud. No effect on slicer activity. Recruited to nuage but is less stably associated than wild-type and more readily diffuses into the cytosol. Fails to localize to the pole plasm. Unable to rescue transposon derepression and sterility phenotypes in a mutant model." evidence="36 38">
    <original>RGRGRGRKPNNVEANR</original>
    <variation>KGKGKGKKPNNVEANK</variation>
    <location>
        <begin position="11"/>
        <end position="26"/>
    </location>
</feature>
<feature type="mutagenesis site" description="Abolishes methylation and interaction with tud. Does not affect piRNA binding." evidence="21 23">
    <original>RGRGRGR</original>
    <variation>KGKGKGK</variation>
    <location>
        <begin position="11"/>
        <end position="17"/>
    </location>
</feature>
<feature type="mutagenesis site" description="Abrogates symmetrical dimethylation of arginine modification, probably due to incomplete piRNA binding." evidence="38">
    <original>YY</original>
    <variation>AA</variation>
    <location>
        <begin position="345"/>
        <end position="346"/>
    </location>
</feature>
<feature type="mutagenesis site" description="Abrogates piRNA binding. Prevents recruitment of csul/PRMT5 and reduces the level of symmetrical methylation of arginine PTM. Prevents localization to the nuage. Does not affect binding to krimp. Abrogates interaction with tud. Fails to localize to the pole plasm." evidence="36 38">
    <original>YSCIK</original>
    <variation>LSCIE</variation>
    <location>
        <begin position="568"/>
        <end position="572"/>
    </location>
</feature>
<feature type="mutagenesis site" description="Putative catalytic mutant. Enhances meiotic drive." evidence="33">
    <original>E</original>
    <variation>A</variation>
    <location>
        <position position="721"/>
    </location>
</feature>
<feature type="sequence conflict" description="In Ref. 3; AGA18939/AGA18942." evidence="46" ref="3">
    <original>V</original>
    <variation>G</variation>
    <location>
        <position position="8"/>
    </location>
</feature>
<feature type="sequence conflict" description="In Ref. 7; AFX62835." evidence="46" ref="7">
    <original>F</original>
    <variation>S</variation>
    <location>
        <position position="118"/>
    </location>
</feature>
<feature type="sequence conflict" description="In Ref. 3; AGA18939/AGA18941/AGA18942 and 7; AFX62834." evidence="46" ref="3 7">
    <original>N</original>
    <variation>T</variation>
    <location>
        <position position="193"/>
    </location>
</feature>
<feature type="sequence conflict" description="In Ref. 7; AFX62833." evidence="46" ref="7">
    <original>D</original>
    <variation>G</variation>
    <location>
        <position position="295"/>
    </location>
</feature>
<feature type="sequence conflict" description="In Ref. 7; AFX62833/AFX62834." evidence="46" ref="7">
    <original>N</original>
    <variation>K</variation>
    <location>
        <position position="551"/>
    </location>
</feature>
<feature type="sequence conflict" description="In Ref. 7; AFX62834." evidence="46" ref="7">
    <original>D</original>
    <variation>G</variation>
    <location>
        <position position="578"/>
    </location>
</feature>
<feature type="sequence conflict" description="In Ref. 7; AFX62834." evidence="46" ref="7">
    <original>K</original>
    <variation>R</variation>
    <location>
        <position position="615"/>
    </location>
</feature>
<feature type="sequence conflict" description="In Ref. 3; AGA18946." evidence="46" ref="3">
    <original>A</original>
    <variation>S</variation>
    <location>
        <position position="685"/>
    </location>
</feature>
<feature type="sequence conflict" description="In Ref. 7; AFX62834." evidence="46" ref="7">
    <original>I</original>
    <variation>T</variation>
    <location>
        <position position="747"/>
    </location>
</feature>
<feature type="sequence conflict" description="In Ref. 3; AGA18940/AGA18942/AGA18946 and 7; AFX62833/AFX62834." evidence="46" ref="3 7">
    <original>S</original>
    <variation>T</variation>
    <location>
        <position position="755"/>
    </location>
</feature>
<feature type="sequence conflict" description="In Ref. 7; AFX62833." evidence="46" ref="7">
    <original>M</original>
    <variation>T</variation>
    <location>
        <position position="823"/>
    </location>
</feature>
<comment type="function">
    <text evidence="5 6 9 10 11 12 13 14 15 16 17 18 19 20 24 26 27 28 33 34 35 36 38 39 41">Component of the perinuclear meiotic nuage, a germline-specific subcellular membraneless ribonucleoprotein compartment involved in production of transposable element-repressing Piwi-interacting RNA (piRNA)-induced silencing complexes (piRISCs), which are essential for maintaining germline integrity during oogenesis; essential for the formation and/or structural integrity of nuage particles (PubMed:12538514, PubMed:15090597, PubMed:17428915, PubMed:18590813, PubMed:26212455, PubMed:26295961). Acts via the Piwi-interacting RNA (piRNA) metabolic process, which mediates the repression of transposable elements during meiosis by forming complexes composed of piRNAs and Piwi proteins and governs the methylation and subsequent repression of transposons (PubMed:17346786, PubMed:19959991, PubMed:20980675, PubMed:34210982). Directly binds piRNAs, a class of 24 to 30 nucleotide RNAs that are generated by a Dicer-independent mechanism and are primarily derived from transposons and other repeated sequence elements (PubMed:17872506, PubMed:19959991, PubMed:20980675, PubMed:26212455, PubMed:26295961). Shows RNA cleavage or slicer activity; including aub-piRNA complexes from ovary and testis (PubMed:17322028, PubMed:17872506, PubMed:34210982). When loaded with guide piRNAs recognizes and cleaves complementary RNAs to repress their expression and produce complementary piRNAs (PubMed:17346786, PubMed:34210982). Together with Piwi protein AGO3 recruited to subregions of the perinuclear nuage by krimp, which coordinates their activity in the ping-pong amplification step of secondary piRNA biogenesis (PubMed:26295961, PubMed:34210982). Krimp recruits piRNA bound aub and unbound AGO3, bringing them into close proximity to facilitate the loading onto AGO3 of freshly cut piRNAs generated by aub cleavage of target sequences; krimp recognizes the piRNA loading state of the Piwi proteins via symmetrically dimethylated arginine modification in their N-terminus (PubMed:34210982). Important for asymmetric ping-pong amplification to bias production towards antisense piRNAs capable of silencing transposable elements (PubMed:26212455). Required for the localization of mael and krimp to the meiotic nuage (PubMed:12538514, PubMed:17428915). In ovary, associates predominantly with antisense piRNAs that contain uridine at their 5' end (PubMed:26212455). In testis, associates with Su(Ste) antisense piRNAs (most abundant class of piRNAs found in complex with aub in testes) and negatively regulates Ste expression, most likely by cleaving its transcripts (PubMed:17872506). Also in testis, may repress translation of vas when associated with a piRNA derived from chromosome X, termed AT-chX-1, whose sequence shows strong complementarity to vas mRNA (PubMed:17872506). Involved in repression of long interspersed nuclear elements (LINEs) including HeT-A, I-element and TART LINEs (PubMed:17428915). Repression of specialized telomeric retroelements HeT-A and TART is involved in telomere regulation; Drosophila telomeres being maintained by transposition of specialized telomeric retroelements (PubMed:16452506). Also involved in telomeric trans-silencing, a repression mechanism by which a transposon or a transgene inserted in subtelomeric heterochromatin has the capacity to repress in trans, in the female germline, a homologous transposon, or transgene located in euchromatin (PubMed:14752161, PubMed:15372228). Involved in the suppression of meiotic drive of sex chromosomes and autosomes (PubMed:23267055, PubMed:9927466). Involved in transposon silencing in the adult brain (PubMed:23559253). Required for dorsal-ventral as well as anterior-posterior patterning of the egg (PubMed:11526087). Required during oogenesis for primordial germ cell formation and activation of RNA interference (PubMed:12154120). During early oogenesis, required for osk mRNA silencing and polarization of the microtubule cytoskeleton (PubMed:15035984, PubMed:1783295, PubMed:8625849). During mid-oogenesis, required for osk mRNA localization to the posterior pole and efficient translation of osk and grk (PubMed:15035984, PubMed:1783295, PubMed:8625849). During embryogenesis, required for posterior localization of nanos (nos) mRNA, independently of osk, and pole cell formation (PubMed:15035984, PubMed:20937269). Forms a complex with smg, twin, AGO3 and specific piRNAs that targets nanos mRNA (and probably other maternal mRNAS) for deadenylation promoting its decay during early embryogenesis (PubMed:20953170).</text>
</comment>
<comment type="subunit">
    <text evidence="20 23 24 25 26 27 29 30 36 37 38">Component of the ping-pong piRNA processing (4P) complex consisting of krimp, aub and AGO3 (PubMed:26295961, PubMed:34210982). Interacts (via N-terminus when symmetrically dimethylated on arginine residues) with krimp (via tudor domain); this interaction requires methylation of at least one N-terminal arginie residue (PubMed:26295961, PubMed:34210982). Interacts with vas and AGO3 (PubMed:18590813, PubMed:19959991). May form part of a piRNA processing complex consisting of tud, aub and AGO3 (PubMed:19959991). Interacts (when symmetrically dimethylated on arginine residues) with tud; methylation and/or interaction requires association with piRNA (PubMed:18590813, PubMed:19926723, PubMed:19959991, PubMed:20713507, PubMed:34210982). Interacts (via N-terminus and when associated with piRNA) with csul/PRMT5; the interaction recruits the PRMT5 methylosome complex to modify N-terminal arginines by symmetrical dimethylation but involves residues other than the arginines to be modified (PubMed:34210982). Forms a complex with smg, twin, AGO3, nanos mRNA and piRNAs that targets the nanos 3'-untranslated region, in early embryos (PubMed:20953170). Interacts with nanos mRNA and rump (in an RNA-dependent manner) (PubMed:20937269). Interacts with papi and vret (PubMed:21447556, PubMed:21831924). Interacts with me31B (PubMed:28945271).</text>
</comment>
<comment type="interaction">
    <interactant intactId="EBI-98862">
        <id>O76922</id>
    </interactant>
    <interactant intactId="EBI-498741">
        <id>P25823</id>
        <label>tud</label>
    </interactant>
    <organismsDiffer>false</organismsDiffer>
    <experiments>7</experiments>
</comment>
<comment type="subcellular location">
    <subcellularLocation>
        <location evidence="5 12 16 19 21 22 23 25 27 28 29 36 37">Cytoplasm</location>
    </subcellularLocation>
    <subcellularLocation>
        <location evidence="36 38">Cytoplasm</location>
        <location evidence="36 38">Cytosol</location>
    </subcellularLocation>
    <subcellularLocation>
        <location evidence="17 31 36 38">Cytoplasm</location>
        <location evidence="17 31 36 38">Perinuclear region</location>
    </subcellularLocation>
    <subcellularLocation>
        <location evidence="17 31 36 38">Cytoplasm</location>
        <location evidence="17 31 36 38">Cytoplasmic ribonucleoprotein granule</location>
    </subcellularLocation>
    <text evidence="5 12 16 17 19 21 22 23 25 27 28 29 31 36 37 38">Component of the perinuclear meiotic nuage (also known as germline granule or P granule), a germline-specific membraneless ribonucleoprotein biocondensate involved in post-transcriptional regulation of transposons and mRNAs (PubMed:17428915, PubMed:22303351, PubMed:26295961, PubMed:34210982). Also displays diffused cytoplasmic localization; unmethylated protein is less stably associated with the nuage and more likely to diffuse into the cytosol (PubMed:26295961, PubMed:34210982). When methylated on arginines protein is recruited to granular subregions of the nuage by krimp (PubMed:26295961). Localization to the nuage requires piRNA association (PubMed:26295961). Localization to the nuage is dependent on spn-E and tud but not AGO3; requires krimp for localization to nuage in testes but not in ovaries (PubMed:17428915, PubMed:22303351, PubMed:26295961). In the oocyte and later in the embryo, concentrates at the posterior pole as a component of polar granules of the pole plasm (PubMed:28945271, PubMed:34210982). In the cytoplasm of syncytial embryos, accumulates in discrete foci.</text>
</comment>
<comment type="alternative products">
    <event type="alternative splicing"/>
    <isoform>
        <id>O76922-1</id>
        <name evidence="4 7 8 32 40 41 42">A</name>
        <sequence type="displayed"/>
    </isoform>
    <isoform>
        <id>O76922-2</id>
        <name evidence="4 8 42">C</name>
        <sequence type="described" ref="VSP_047356"/>
    </isoform>
</comment>
<comment type="tissue specificity">
    <text evidence="5 16 19 21 23 25 27 28 34 41">Expressed in ovary. In the germarium, found in germline stem and cyst cells. In egg chambers from stage 6, expressed both in nurse cells and oocytes. In embryos, accumulates in the pole cells, although low expression is detected throughout the entire embryo. In testis, expressed in germline stem cells, gonialblast and spermatogonia cells (at protein level). In the adult brain, expressed in the ellipsoid body, the mushroom body subdivision in the peduncle and the cell body layer. Expressed specifically in alpha'/beta' and gamma neurons.</text>
</comment>
<comment type="developmental stage">
    <text evidence="16 19 31 41">Expressed maternally in oocytes and 0-6 hours old embryos (at protein level) (PubMed:17346786, PubMed:17872506, PubMed:9927466). Expressed in germline cells throughout oogenesis and spermatogenesis (at protein level) (PubMed:22303351).</text>
</comment>
<comment type="PTM">
    <text evidence="21 23 24 25 35 36 38 44">Symmetrical dimethylation of arginines (sDMA) on Arg-11, Arg-13 and/or Arg-15 by csul/PRMT5/DART5, is required for binding to tud, localization to the pole plasm and association with the correct piRNAs (PubMed:19377467, PubMed:19926723, PubMed:19959991, PubMed:20713507, PubMed:26212455, PubMed:34210982). SDMA on Arg-11, Arg-13, Arg-15 and/or Arg-17 is required for binding to krimp and stable recruitment to subregions of the nuage (PubMed:26295961, PubMed:34210982). Methylation state does not affect protein stability (PubMed:34210982). SDMA plays an important role in ping-pong amplification of piRNAs and is essential for function in vivo (PubMed:34210982). Methylation state functions as an indicator of its piRNA binding state (PubMed:34210982). PiRNA binding promotes sDMA modification; piRNA binding induces a conformational change that exposes the N-terminal arginines, making them available to the methylosome complex (PubMed:34210982).</text>
</comment>
<comment type="disruption phenotype">
    <text evidence="18 28 39 41">Female sterility, consequence of a maternal lethal effect. Approximately 2% of the embryos from aub mutant females are fertilized and secrete a recognizable cuticle, while all of them lack abdominal segments. Male sterility accompanied by production of Ste protein crystals in primary spermatocytes and by meiotic non-disjunction and drive of sex chromosomes and autosomes.</text>
</comment>
<comment type="similarity">
    <text evidence="46">Belongs to the argonaute family. Piwi subfamily.</text>
</comment>
<sequence length="866" mass="98559">MNLPPNPVIARGRGRGRKPNNVEANRGFAPSLGQKSDPSHSEGNQASGGNGGGGDAQVGPSIEKSSLSAVQMHKSEGDPRGSVRGRRLITDLVYSRPPGMTSKKGVVGTHITVQANYFKVLKRPNWTIYQYRVDFTPDVEATRLRRSFLYEHKGILGGYIFDGTNMFCINQFKAVQDSPYVLELVTKSRAGENIEIKIKAVGSVQSTDAEQFQVLNLILRRAMEGLDLKLVSRYYYDPQAKINLENFRMQLWPGYQTSIRQHENDILLCSEICHKVMRTETLYNILSDAIRDSDDYQSTFKRAVMGMVILTDYNNKTYRIDDVDFQSTPLCKFKTNDGEISYVDYYKKRYNIIIRDLKQPLVMSRPTDKNIRGGNDQAIMIIPELARATGMTDAMRADFRTLRAMSEHTRLNPDRRIERLRMFNKRLKSCKQSVETLKSWNIELDSALVEIPARVLPPEKILFGNQKIFVCDARADWTNEFRTCSMFKNVHINRWYVITPSRNLRETQEFVQMCIRTASSMKMNICNPIYEEIPDDRNGTYSQAIDNAAANDPQIVMVVMRSPNEEKYSCIKKRTCVDRPVPSQVVTLKVIAPRQQKPTGLMSIATKVVIQMNAKLMGAPWQVVIPLHGLMTVGFDVCHSPKNKNKSYGAFVATMDQKESFRYFSTVNEHIKGQELSEQMSVNMACALRSYQEQHRSLPERILFFRDGVGDGQLYQVVNSEVNTLKDRLDEIYKSAGKQEGCRMTFIIVSKRINSRYFTGHRNPVPGTVVDDVITLPERYDFFLVSQAVRIGTVSPTSYNVISDNMGLNADKLQMLSYKMTHMYYNYSGTIRVPAVCHYAHKLAFLVAESINRAPSAGLQNQLYFL</sequence>
<protein>
    <recommendedName>
        <fullName evidence="60">Protein aubergine</fullName>
        <ecNumber evidence="15 19 38">3.1.26.-</ecNumber>
    </recommendedName>
    <alternativeName>
        <fullName evidence="45 60">Protein sting</fullName>
    </alternativeName>
</protein>
<accession>O76922</accession>
<accession>A8DYZ0</accession>
<accession>K7WQ34</accession>
<accession>K7X543</accession>
<accession>K7XHY9</accession>
<accession>L0CPY1</accession>
<accession>L0CQ70</accession>
<accession>L0CRA0</accession>
<accession>L0CRA6</accession>
<accession>L0CRP1</accession>
<accession>L0CRZ4</accession>
<accession>L0CS00</accession>
<keyword id="KW-0002">3D-structure</keyword>
<keyword id="KW-0007">Acetylation</keyword>
<keyword id="KW-0025">Alternative splicing</keyword>
<keyword id="KW-0963">Cytoplasm</keyword>
<keyword id="KW-0217">Developmental protein</keyword>
<keyword id="KW-0221">Differentiation</keyword>
<keyword id="KW-0378">Hydrolase</keyword>
<keyword id="KW-0488">Methylation</keyword>
<keyword id="KW-0896">Oogenesis</keyword>
<keyword id="KW-1185">Reference proteome</keyword>
<keyword id="KW-0694">RNA-binding</keyword>
<keyword id="KW-0943">RNA-mediated gene silencing</keyword>
<keyword id="KW-0744">Spermatogenesis</keyword>
<keyword id="KW-0810">Translation regulation</keyword>
<reference evidence="59" key="1">
    <citation type="journal article" date="1996" name="Mol. Gen. Genet.">
        <title>A newly identified Minute locus, M(2)32D, encodes the ribosomal protein L9 in Drosophila melanogaster.</title>
        <authorList>
            <person name="Schmidt A."/>
            <person name="Hollmann M."/>
            <person name="Schaefer U."/>
        </authorList>
    </citation>
    <scope>NUCLEOTIDE SEQUENCE [GENOMIC DNA]</scope>
    <source>
        <strain evidence="59">Canton-S</strain>
        <tissue evidence="59">Embryo</tissue>
    </source>
</reference>
<reference evidence="46 59" key="2">
    <citation type="journal article" date="1999" name="Genetics">
        <title>Genetic and molecular characterization of sting, a gene involved in crystal formation and meiotic drive in the male germ line of Drosophila melanogaster.</title>
        <authorList>
            <person name="Schmidt A."/>
            <person name="Palumbo G."/>
            <person name="Bozzetti M.P."/>
            <person name="Tritto P."/>
            <person name="Pimpinelli S."/>
            <person name="Schafer U."/>
        </authorList>
    </citation>
    <scope>NUCLEOTIDE SEQUENCE [GENOMIC DNA]</scope>
    <scope>FUNCTION</scope>
    <scope>TISSUE SPECIFICITY</scope>
    <scope>DEVELOPMENTAL STAGE</scope>
    <scope>DISRUPTION PHENOTYPE</scope>
    <source>
        <strain evidence="59">Canton-S</strain>
        <tissue evidence="59">Embryo</tissue>
    </source>
</reference>
<reference evidence="56" key="3">
    <citation type="journal article" date="2012" name="Genetics">
        <title>Long-term and short-term evolutionary impacts of transposable elements on Drosophila.</title>
        <authorList>
            <person name="Lee Y.C."/>
            <person name="Langley C.H."/>
        </authorList>
    </citation>
    <scope>NUCLEOTIDE SEQUENCE [GENOMIC DNA]</scope>
    <source>
        <strain evidence="58">3846</strain>
        <strain evidence="54">3852</strain>
        <strain evidence="57">3853</strain>
        <strain evidence="53">3854</strain>
        <strain evidence="52">3892</strain>
        <strain evidence="55">3893</strain>
        <strain evidence="51">3895</strain>
    </source>
</reference>
<reference evidence="49" key="4">
    <citation type="journal article" date="2000" name="Science">
        <title>The genome sequence of Drosophila melanogaster.</title>
        <authorList>
            <person name="Adams M.D."/>
            <person name="Celniker S.E."/>
            <person name="Holt R.A."/>
            <person name="Evans C.A."/>
            <person name="Gocayne J.D."/>
            <person name="Amanatides P.G."/>
            <person name="Scherer S.E."/>
            <person name="Li P.W."/>
            <person name="Hoskins R.A."/>
            <person name="Galle R.F."/>
            <person name="George R.A."/>
            <person name="Lewis S.E."/>
            <person name="Richards S."/>
            <person name="Ashburner M."/>
            <person name="Henderson S.N."/>
            <person name="Sutton G.G."/>
            <person name="Wortman J.R."/>
            <person name="Yandell M.D."/>
            <person name="Zhang Q."/>
            <person name="Chen L.X."/>
            <person name="Brandon R.C."/>
            <person name="Rogers Y.-H.C."/>
            <person name="Blazej R.G."/>
            <person name="Champe M."/>
            <person name="Pfeiffer B.D."/>
            <person name="Wan K.H."/>
            <person name="Doyle C."/>
            <person name="Baxter E.G."/>
            <person name="Helt G."/>
            <person name="Nelson C.R."/>
            <person name="Miklos G.L.G."/>
            <person name="Abril J.F."/>
            <person name="Agbayani A."/>
            <person name="An H.-J."/>
            <person name="Andrews-Pfannkoch C."/>
            <person name="Baldwin D."/>
            <person name="Ballew R.M."/>
            <person name="Basu A."/>
            <person name="Baxendale J."/>
            <person name="Bayraktaroglu L."/>
            <person name="Beasley E.M."/>
            <person name="Beeson K.Y."/>
            <person name="Benos P.V."/>
            <person name="Berman B.P."/>
            <person name="Bhandari D."/>
            <person name="Bolshakov S."/>
            <person name="Borkova D."/>
            <person name="Botchan M.R."/>
            <person name="Bouck J."/>
            <person name="Brokstein P."/>
            <person name="Brottier P."/>
            <person name="Burtis K.C."/>
            <person name="Busam D.A."/>
            <person name="Butler H."/>
            <person name="Cadieu E."/>
            <person name="Center A."/>
            <person name="Chandra I."/>
            <person name="Cherry J.M."/>
            <person name="Cawley S."/>
            <person name="Dahlke C."/>
            <person name="Davenport L.B."/>
            <person name="Davies P."/>
            <person name="de Pablos B."/>
            <person name="Delcher A."/>
            <person name="Deng Z."/>
            <person name="Mays A.D."/>
            <person name="Dew I."/>
            <person name="Dietz S.M."/>
            <person name="Dodson K."/>
            <person name="Doup L.E."/>
            <person name="Downes M."/>
            <person name="Dugan-Rocha S."/>
            <person name="Dunkov B.C."/>
            <person name="Dunn P."/>
            <person name="Durbin K.J."/>
            <person name="Evangelista C.C."/>
            <person name="Ferraz C."/>
            <person name="Ferriera S."/>
            <person name="Fleischmann W."/>
            <person name="Fosler C."/>
            <person name="Gabrielian A.E."/>
            <person name="Garg N.S."/>
            <person name="Gelbart W.M."/>
            <person name="Glasser K."/>
            <person name="Glodek A."/>
            <person name="Gong F."/>
            <person name="Gorrell J.H."/>
            <person name="Gu Z."/>
            <person name="Guan P."/>
            <person name="Harris M."/>
            <person name="Harris N.L."/>
            <person name="Harvey D.A."/>
            <person name="Heiman T.J."/>
            <person name="Hernandez J.R."/>
            <person name="Houck J."/>
            <person name="Hostin D."/>
            <person name="Houston K.A."/>
            <person name="Howland T.J."/>
            <person name="Wei M.-H."/>
            <person name="Ibegwam C."/>
            <person name="Jalali M."/>
            <person name="Kalush F."/>
            <person name="Karpen G.H."/>
            <person name="Ke Z."/>
            <person name="Kennison J.A."/>
            <person name="Ketchum K.A."/>
            <person name="Kimmel B.E."/>
            <person name="Kodira C.D."/>
            <person name="Kraft C.L."/>
            <person name="Kravitz S."/>
            <person name="Kulp D."/>
            <person name="Lai Z."/>
            <person name="Lasko P."/>
            <person name="Lei Y."/>
            <person name="Levitsky A.A."/>
            <person name="Li J.H."/>
            <person name="Li Z."/>
            <person name="Liang Y."/>
            <person name="Lin X."/>
            <person name="Liu X."/>
            <person name="Mattei B."/>
            <person name="McIntosh T.C."/>
            <person name="McLeod M.P."/>
            <person name="McPherson D."/>
            <person name="Merkulov G."/>
            <person name="Milshina N.V."/>
            <person name="Mobarry C."/>
            <person name="Morris J."/>
            <person name="Moshrefi A."/>
            <person name="Mount S.M."/>
            <person name="Moy M."/>
            <person name="Murphy B."/>
            <person name="Murphy L."/>
            <person name="Muzny D.M."/>
            <person name="Nelson D.L."/>
            <person name="Nelson D.R."/>
            <person name="Nelson K.A."/>
            <person name="Nixon K."/>
            <person name="Nusskern D.R."/>
            <person name="Pacleb J.M."/>
            <person name="Palazzolo M."/>
            <person name="Pittman G.S."/>
            <person name="Pan S."/>
            <person name="Pollard J."/>
            <person name="Puri V."/>
            <person name="Reese M.G."/>
            <person name="Reinert K."/>
            <person name="Remington K."/>
            <person name="Saunders R.D.C."/>
            <person name="Scheeler F."/>
            <person name="Shen H."/>
            <person name="Shue B.C."/>
            <person name="Siden-Kiamos I."/>
            <person name="Simpson M."/>
            <person name="Skupski M.P."/>
            <person name="Smith T.J."/>
            <person name="Spier E."/>
            <person name="Spradling A.C."/>
            <person name="Stapleton M."/>
            <person name="Strong R."/>
            <person name="Sun E."/>
            <person name="Svirskas R."/>
            <person name="Tector C."/>
            <person name="Turner R."/>
            <person name="Venter E."/>
            <person name="Wang A.H."/>
            <person name="Wang X."/>
            <person name="Wang Z.-Y."/>
            <person name="Wassarman D.A."/>
            <person name="Weinstock G.M."/>
            <person name="Weissenbach J."/>
            <person name="Williams S.M."/>
            <person name="Woodage T."/>
            <person name="Worley K.C."/>
            <person name="Wu D."/>
            <person name="Yang S."/>
            <person name="Yao Q.A."/>
            <person name="Ye J."/>
            <person name="Yeh R.-F."/>
            <person name="Zaveri J.S."/>
            <person name="Zhan M."/>
            <person name="Zhang G."/>
            <person name="Zhao Q."/>
            <person name="Zheng L."/>
            <person name="Zheng X.H."/>
            <person name="Zhong F.N."/>
            <person name="Zhong W."/>
            <person name="Zhou X."/>
            <person name="Zhu S.C."/>
            <person name="Zhu X."/>
            <person name="Smith H.O."/>
            <person name="Gibbs R.A."/>
            <person name="Myers E.W."/>
            <person name="Rubin G.M."/>
            <person name="Venter J.C."/>
        </authorList>
    </citation>
    <scope>NUCLEOTIDE SEQUENCE [LARGE SCALE GENOMIC DNA]</scope>
    <source>
        <strain>Berkeley</strain>
    </source>
</reference>
<reference evidence="49" key="5">
    <citation type="journal article" date="2002" name="Genome Biol.">
        <title>Annotation of the Drosophila melanogaster euchromatic genome: a systematic review.</title>
        <authorList>
            <person name="Misra S."/>
            <person name="Crosby M.A."/>
            <person name="Mungall C.J."/>
            <person name="Matthews B.B."/>
            <person name="Campbell K.S."/>
            <person name="Hradecky P."/>
            <person name="Huang Y."/>
            <person name="Kaminker J.S."/>
            <person name="Millburn G.H."/>
            <person name="Prochnik S.E."/>
            <person name="Smith C.D."/>
            <person name="Tupy J.L."/>
            <person name="Whitfield E.J."/>
            <person name="Bayraktaroglu L."/>
            <person name="Berman B.P."/>
            <person name="Bettencourt B.R."/>
            <person name="Celniker S.E."/>
            <person name="de Grey A.D.N.J."/>
            <person name="Drysdale R.A."/>
            <person name="Harris N.L."/>
            <person name="Richter J."/>
            <person name="Russo S."/>
            <person name="Schroeder A.J."/>
            <person name="Shu S.Q."/>
            <person name="Stapleton M."/>
            <person name="Yamada C."/>
            <person name="Ashburner M."/>
            <person name="Gelbart W.M."/>
            <person name="Rubin G.M."/>
            <person name="Lewis S.E."/>
        </authorList>
    </citation>
    <scope>GENOME REANNOTATION</scope>
    <source>
        <strain>Berkeley</strain>
    </source>
</reference>
<reference evidence="46 48" key="6">
    <citation type="journal article" date="2002" name="Genome Biol.">
        <title>A Drosophila full-length cDNA resource.</title>
        <authorList>
            <person name="Stapleton M."/>
            <person name="Carlson J.W."/>
            <person name="Brokstein P."/>
            <person name="Yu C."/>
            <person name="Champe M."/>
            <person name="George R.A."/>
            <person name="Guarin H."/>
            <person name="Kronmiller B."/>
            <person name="Pacleb J.M."/>
            <person name="Park S."/>
            <person name="Wan K.H."/>
            <person name="Rubin G.M."/>
            <person name="Celniker S.E."/>
        </authorList>
    </citation>
    <scope>NUCLEOTIDE SEQUENCE [LARGE SCALE MRNA] (ISOFORM A)</scope>
    <source>
        <strain evidence="7">Berkeley</strain>
        <tissue evidence="7">Embryo</tissue>
    </source>
</reference>
<reference evidence="50" key="7">
    <citation type="submission" date="2012-09" db="EMBL/GenBank/DDBJ databases">
        <title>Variability in the piRNA pathway induces a variable load of transposable elements in wild type strains of Drosophila simulans.</title>
        <authorList>
            <person name="Fablet M."/>
            <person name="Akkouche A."/>
            <person name="Braman V."/>
            <person name="Vieira C."/>
        </authorList>
    </citation>
    <scope>NUCLEOTIDE SEQUENCE [MRNA] OF 101-847</scope>
</reference>
<reference evidence="46" key="8">
    <citation type="journal article" date="1991" name="Genetics">
        <title>Female sterile mutations on the second chromosome of Drosophila melanogaster. II. Mutations blocking oogenesis or altering egg morphology.</title>
        <authorList>
            <person name="Schupbach T."/>
            <person name="Wieschaus E."/>
        </authorList>
    </citation>
    <scope>FUNCTION</scope>
    <scope>DISRUPTION PHENOTYPE</scope>
</reference>
<reference evidence="46" key="9">
    <citation type="journal article" date="1996" name="Development">
        <title>aubergine enhances oskar translation in the Drosophila ovary.</title>
        <authorList>
            <person name="Wilson J.E."/>
            <person name="Connell J.E."/>
            <person name="Macdonald P.M."/>
        </authorList>
    </citation>
    <scope>FUNCTION</scope>
    <scope>DISRUPTION PHENOTYPE</scope>
</reference>
<reference evidence="46" key="10">
    <citation type="journal article" date="2001" name="Development">
        <title>Aubergine encodes a Drosophila polar granule component required for pole cell formation and related to eIF2C.</title>
        <authorList>
            <person name="Harris A.N."/>
            <person name="Macdonald P.M."/>
        </authorList>
    </citation>
    <scope>FUNCTION</scope>
    <scope>SUBCELLULAR LOCATION</scope>
    <scope>TISSUE SPECIFICITY</scope>
</reference>
<reference evidence="46" key="11">
    <citation type="journal article" date="2002" name="Genes Dev.">
        <title>RNAi is activated during Drosophila oocyte maturation in a manner dependent on aubergine and spindle-E.</title>
        <authorList>
            <person name="Kennerdell J.R."/>
            <person name="Yamaguchi S."/>
            <person name="Carthew R.W."/>
        </authorList>
    </citation>
    <scope>FUNCTION</scope>
</reference>
<reference evidence="46" key="12">
    <citation type="journal article" date="2003" name="Development">
        <title>Maelstrom, a Drosophila spindle-class gene, encodes a protein that colocalizes with Vasa and RDE1/AGO1 homolog, Aubergine, in nuage.</title>
        <authorList>
            <person name="Findley S.D."/>
            <person name="Tamanaha M."/>
            <person name="Clegg N.J."/>
            <person name="Ruohola-Baker H."/>
        </authorList>
    </citation>
    <scope>FUNCTION</scope>
</reference>
<reference evidence="46" key="13">
    <citation type="journal article" date="2004" name="Cell">
        <title>The Drosophila SDE3 homolog armitage is required for oskar mRNA silencing and embryonic axis specification.</title>
        <authorList>
            <person name="Cook H.A."/>
            <person name="Koppetsch B.S."/>
            <person name="Wu J."/>
            <person name="Theurkauf W.E."/>
        </authorList>
    </citation>
    <scope>FUNCTION</scope>
</reference>
<reference evidence="46" key="14">
    <citation type="journal article" date="2004" name="J. Cell Sci.">
        <title>Live imaging of nuage and polar granules: evidence against a precursor-product relationship and a novel role for Oskar in stabilization of polar granule components.</title>
        <authorList>
            <person name="Snee M.J."/>
            <person name="Macdonald P.M."/>
        </authorList>
    </citation>
    <scope>FUNCTION</scope>
    <scope>SUBCELLULAR LOCATION</scope>
</reference>
<reference evidence="46" key="15">
    <citation type="journal article" date="2004" name="Mol. Genet. Genomics">
        <title>aubergine mutations in Drosophila melanogaster impair P cytotype determination by telomeric P elements inserted in heterochromatin.</title>
        <authorList>
            <person name="Reiss D."/>
            <person name="Josse T."/>
            <person name="Anxolabehere D."/>
            <person name="Ronsseray S."/>
        </authorList>
    </citation>
    <scope>FUNCTION</scope>
</reference>
<reference evidence="46" key="16">
    <citation type="journal article" date="2004" name="Science">
        <title>Heterochromatic silencing and HP1 localization in Drosophila are dependent on the RNAi machinery.</title>
        <authorList>
            <person name="Pal-Bhadra M."/>
            <person name="Leibovitch B.A."/>
            <person name="Gandhi S.G."/>
            <person name="Rao M."/>
            <person name="Bhadra U."/>
            <person name="Birchler J.A."/>
            <person name="Elgin S.C.R."/>
        </authorList>
    </citation>
    <scope>FUNCTION</scope>
</reference>
<reference evidence="46" key="17">
    <citation type="journal article" date="2006" name="Genes Dev.">
        <title>Telomere elongation is under the control of the RNAi-based mechanism in the Drosophila germline.</title>
        <authorList>
            <person name="Savitsky M."/>
            <person name="Kwon D."/>
            <person name="Georgiev P."/>
            <person name="Kalmykova A."/>
            <person name="Gvozdev V."/>
        </authorList>
    </citation>
    <scope>FUNCTION</scope>
</reference>
<reference evidence="46" key="18">
    <citation type="journal article" date="2007" name="Cell">
        <title>Discrete small RNA-generating loci as master regulators of transposon activity in Drosophila.</title>
        <authorList>
            <person name="Brennecke J."/>
            <person name="Aravin A.A."/>
            <person name="Stark A."/>
            <person name="Dus M."/>
            <person name="Kellis M."/>
            <person name="Sachidanandam R."/>
            <person name="Hannon G.J."/>
        </authorList>
    </citation>
    <scope>FUNCTION</scope>
    <scope>RNA-BINDING</scope>
    <scope>SUBCELLULAR LOCATION</scope>
    <scope>TISSUE SPECIFICITY</scope>
    <scope>DEVELOPMENTAL STAGE</scope>
</reference>
<reference evidence="46" key="19">
    <citation type="journal article" date="2007" name="Proc. Natl. Acad. Sci. U.S.A.">
        <title>Unique germ-line organelle, nuage, functions to repress selfish genetic elements in Drosophila melanogaster.</title>
        <authorList>
            <person name="Lim A.K."/>
            <person name="Kai T."/>
        </authorList>
    </citation>
    <scope>FUNCTION</scope>
    <scope>SUBCELLULAR LOCATION</scope>
</reference>
<reference evidence="46" key="20">
    <citation type="journal article" date="2007" name="Proc. Natl. Acad. Sci. U.S.A.">
        <authorList>
            <person name="Lim A.K."/>
            <person name="Kai T."/>
        </authorList>
    </citation>
    <scope>ERRATUM OF PUBMED:17428915</scope>
</reference>
<reference evidence="46" key="21">
    <citation type="journal article" date="2007" name="RNA">
        <title>Gene silencing mechanisms mediated by Aubergine piRNA complexes in Drosophila male gonad.</title>
        <authorList>
            <person name="Nishida K.M."/>
            <person name="Saito K."/>
            <person name="Mori T."/>
            <person name="Kawamura Y."/>
            <person name="Nagami-Okada T."/>
            <person name="Inagaki S."/>
            <person name="Siomi H."/>
            <person name="Siomi M.C."/>
        </authorList>
    </citation>
    <scope>FUNCTION</scope>
    <scope>CATALYTIC ACTIVITY</scope>
    <scope>RNA-BINDING</scope>
    <scope>SUBCELLULAR LOCATION</scope>
    <scope>TISSUE SPECIFICITY</scope>
    <scope>DEVELOPMENTAL STAGE</scope>
</reference>
<reference evidence="46" key="22">
    <citation type="journal article" date="2007" name="Science">
        <title>A slicer-mediated mechanism for repeat-associated siRNA 5' end formation in Drosophila.</title>
        <authorList>
            <person name="Gunawardane L.S."/>
            <person name="Saito K."/>
            <person name="Nishida K.M."/>
            <person name="Miyoshi K."/>
            <person name="Kawamura Y."/>
            <person name="Nagami T."/>
            <person name="Siomi H."/>
            <person name="Siomi M.C."/>
        </authorList>
    </citation>
    <scope>FUNCTION</scope>
    <scope>CATALYTIC ACTIVITY</scope>
    <scope>RNA-BINDING</scope>
</reference>
<reference evidence="46" key="23">
    <citation type="journal article" date="2008" name="Mech. Dev.">
        <title>Isolation of new polar granule components in Drosophila reveals P body and ER associated proteins.</title>
        <authorList>
            <person name="Thomson T."/>
            <person name="Liu N."/>
            <person name="Arkov A."/>
            <person name="Lehmann R."/>
            <person name="Lasko P."/>
        </authorList>
    </citation>
    <scope>FUNCTION</scope>
    <scope>INTERACTION WITH VAS AND TUD</scope>
    <scope>SUBCELLULAR LOCATION</scope>
</reference>
<reference evidence="46" key="24">
    <citation type="journal article" date="2009" name="Cell">
        <title>Collapse of germline piRNAs in the absence of Argonaute3 reveals somatic piRNAs in flies.</title>
        <authorList>
            <person name="Li C."/>
            <person name="Vagin V.V."/>
            <person name="Lee S."/>
            <person name="Xu J."/>
            <person name="Ma S."/>
            <person name="Xi H."/>
            <person name="Seitz H."/>
            <person name="Horwich M.D."/>
            <person name="Syrzycka M."/>
            <person name="Honda B.M."/>
            <person name="Kittler E.L."/>
            <person name="Zapp M.L."/>
            <person name="Klattenhoff C."/>
            <person name="Schulz N."/>
            <person name="Theurkauf W.E."/>
            <person name="Weng Z."/>
            <person name="Zamore P.D."/>
        </authorList>
    </citation>
    <scope>SUBCELLULAR LOCATION</scope>
</reference>
<reference evidence="46" key="25">
    <citation type="journal article" date="2009" name="EMBO J.">
        <title>Functional involvement of Tudor and dPRMT5 in the piRNA processing pathway in Drosophila germlines.</title>
        <authorList>
            <person name="Nishida K.M."/>
            <person name="Okada T.N."/>
            <person name="Kawamura T."/>
            <person name="Mituyama T."/>
            <person name="Kawamura Y."/>
            <person name="Inagaki S."/>
            <person name="Huang H."/>
            <person name="Chen D."/>
            <person name="Kodama T."/>
            <person name="Siomi H."/>
            <person name="Siomi M.C."/>
        </authorList>
    </citation>
    <scope>IDENTIFICATION BY MASS SPECTROMETRY</scope>
    <scope>FUNCTION</scope>
    <scope>RNA-BINDING</scope>
    <scope>INTERACTION WITH TUD AND AGO3</scope>
    <scope>ACETYLATION AT MET-1</scope>
    <scope>METHYLATION AT ARG-11; ARG-13 AND ARG-15</scope>
</reference>
<reference evidence="46" key="26">
    <citation type="journal article" date="2009" name="Nat. Cell Biol.">
        <title>Arginine methylation of Piwi proteins catalysed by dPRMT5 is required for Ago3 and Aub stability.</title>
        <authorList>
            <person name="Kirino Y."/>
            <person name="Kim N."/>
            <person name="de Planell-Saguer M."/>
            <person name="Khandros E."/>
            <person name="Chiorean S."/>
            <person name="Klein P.S."/>
            <person name="Rigoutsos I."/>
            <person name="Jongens T.A."/>
            <person name="Mourelatos Z."/>
        </authorList>
    </citation>
    <scope>RNA-BINDING</scope>
    <scope>SUBCELLULAR LOCATION</scope>
    <scope>TISSUE SPECIFICITY</scope>
    <scope>METHYLATION</scope>
    <scope>MUTAGENESIS OF 11-ARG--ARG-17</scope>
</reference>
<reference evidence="46" key="27">
    <citation type="journal article" date="2010" name="Nature">
        <title>Maternal mRNA deadenylation and decay by the piRNA pathway in the early Drosophila embryo.</title>
        <authorList>
            <person name="Rouget C."/>
            <person name="Papin C."/>
            <person name="Boureux A."/>
            <person name="Meunier A.C."/>
            <person name="Franco B."/>
            <person name="Robine N."/>
            <person name="Lai E.C."/>
            <person name="Pelisson A."/>
            <person name="Simonelig M."/>
        </authorList>
    </citation>
    <scope>FUNCTION</scope>
    <scope>RNA-BINDING</scope>
    <scope>INTERACTION WITH SMG; TWIN AND AGO3</scope>
    <scope>SUBCELLULAR LOCATION</scope>
    <scope>TISSUE SPECIFICITY</scope>
</reference>
<reference evidence="46" key="28">
    <citation type="journal article" date="2010" name="RNA">
        <title>Arginine methylation of Aubergine mediates Tudor binding and germ plasm localization.</title>
        <authorList>
            <person name="Kirino Y."/>
            <person name="Vourekas A."/>
            <person name="Sayed N."/>
            <person name="de Lima Alves F."/>
            <person name="Thomson T."/>
            <person name="Lasko P."/>
            <person name="Rappsilber J."/>
            <person name="Jongens T.A."/>
            <person name="Mourelatos Z."/>
        </authorList>
    </citation>
    <scope>INTERACTION WITH TUD</scope>
    <scope>SUBCELLULAR LOCATION</scope>
    <scope>TISSUE SPECIFICITY</scope>
    <scope>METHYLATION</scope>
    <scope>MUTAGENESIS OF 11-ARG--ARG-17</scope>
</reference>
<reference evidence="46" key="29">
    <citation type="journal article" date="2010" name="RNA">
        <title>Biogenesis pathways of piRNAs loaded onto AGO3 in the Drosophila testis.</title>
        <authorList>
            <person name="Nagao A."/>
            <person name="Mituyama T."/>
            <person name="Huang H."/>
            <person name="Chen D."/>
            <person name="Siomi M.C."/>
            <person name="Siomi H."/>
        </authorList>
    </citation>
    <scope>FUNCTION</scope>
    <scope>RNA-BINDING</scope>
    <scope>SUBCELLULAR LOCATION</scope>
    <scope>TISSUE SPECIFICITY</scope>
</reference>
<reference evidence="46" key="30">
    <citation type="journal article" date="2011" name="Development">
        <title>PAPI, a novel TUDOR-domain protein, complexes with AGO3, ME31B and TRAL in the nuage to silence transposition.</title>
        <authorList>
            <person name="Liu L."/>
            <person name="Qi H."/>
            <person name="Wang J."/>
            <person name="Lin H."/>
        </authorList>
    </citation>
    <scope>INTERACTION WITH PAPI</scope>
    <scope>SUBCELLULAR LOCATION</scope>
</reference>
<reference key="31">
    <citation type="journal article" date="2011" name="Development">
        <title>Vreteno, a gonad-specific protein, is essential for germline development and primary piRNA biogenesis in Drosophila.</title>
        <authorList>
            <person name="Zamparini A.L."/>
            <person name="Davis M.Y."/>
            <person name="Malone C.D."/>
            <person name="Vieira E."/>
            <person name="Zavadil J."/>
            <person name="Sachidanandam R."/>
            <person name="Hannon G.J."/>
            <person name="Lehmann R."/>
        </authorList>
    </citation>
    <scope>INTERACTION WITH VRET</scope>
</reference>
<reference evidence="46" key="32">
    <citation type="journal article" date="2011" name="Dev. Biol.">
        <title>Aubergine is a component of a nanos mRNA localization complex.</title>
        <authorList>
            <person name="Becalska A.N."/>
            <person name="Kim Y.R."/>
            <person name="Belletier N.G."/>
            <person name="Lerit D.A."/>
            <person name="Sinsimer K.S."/>
            <person name="Gavis E.R."/>
        </authorList>
    </citation>
    <scope>FUNCTION</scope>
    <scope>RNA-BINDING</scope>
    <scope>INTERACTION WITH RUMP</scope>
</reference>
<reference key="33">
    <citation type="journal article" date="2011" name="Front. Genet.">
        <title>Gender-Specific Hierarchy in Nuage Localization of PIWI-Interacting RNA Factors in Drosophila.</title>
        <authorList>
            <person name="Nagao A."/>
            <person name="Sato K."/>
            <person name="Nishida K.M."/>
            <person name="Siomi H."/>
            <person name="Siomi M.C."/>
        </authorList>
    </citation>
    <scope>SUBCELLULAR LOCATION</scope>
    <scope>DEVELOPMENTAL STAGE</scope>
</reference>
<reference evidence="46" key="34">
    <citation type="journal article" date="2013" name="Genetics">
        <title>Mutations to the piRNA pathway component Aubergine enhance meiotic drive of segregation distorter in Drosophila melanogaster.</title>
        <authorList>
            <person name="Gell S.L."/>
            <person name="Reenan R.A."/>
        </authorList>
    </citation>
    <scope>FUNCTION</scope>
    <scope>MUTAGENESIS OF GLU-721</scope>
</reference>
<reference evidence="46" key="35">
    <citation type="journal article" date="2013" name="Science">
        <title>Transposition-driven genomic heterogeneity in the Drosophila brain.</title>
        <authorList>
            <person name="Perrat P.N."/>
            <person name="DasGupta S."/>
            <person name="Wang J."/>
            <person name="Theurkauf W."/>
            <person name="Weng Z."/>
            <person name="Rosbash M."/>
            <person name="Waddell S."/>
        </authorList>
    </citation>
    <scope>FUNCTION</scope>
    <scope>TISSUE SPECIFICITY</scope>
</reference>
<reference key="36">
    <citation type="journal article" date="2015" name="Mol. Cell">
        <title>Krimper Enforces an Antisense Bias on piRNA Pools by Binding AGO3 in the Drosophila Germline.</title>
        <authorList>
            <person name="Sato K."/>
            <person name="Iwasaki Y.W."/>
            <person name="Shibuya A."/>
            <person name="Carninci P."/>
            <person name="Tsuchizawa Y."/>
            <person name="Ishizu H."/>
            <person name="Siomi M.C."/>
            <person name="Siomi H."/>
        </authorList>
    </citation>
    <scope>FUNCTION</scope>
    <scope>METHYLATION</scope>
</reference>
<reference key="37">
    <citation type="journal article" date="2015" name="Mol. Cell">
        <title>Aub and Ago3 Are Recruited to Nuage through Two Mechanisms to Form a Ping-Pong Complex Assembled by Krimper.</title>
        <authorList>
            <person name="Webster A."/>
            <person name="Li S."/>
            <person name="Hur J.K."/>
            <person name="Wachsmuth M."/>
            <person name="Bois J.S."/>
            <person name="Perkins E.M."/>
            <person name="Patel D.J."/>
            <person name="Aravin A.A."/>
        </authorList>
    </citation>
    <scope>FUNCTION</scope>
    <scope>IDENTIFICATION IN THE PING-PONG PIRNA PROCESSING (4P) COMPLEX</scope>
    <scope>INTERACTION WITH KRIMP</scope>
    <scope>SUBCELLULAR LOCATION</scope>
    <scope>METHYLATION AT ARG-11; ARG-13 ARG-15 AND ARG-17</scope>
    <scope>MUTAGENESIS OF 11-ARG--ARG-26 AND 568-TYR--LYS-572</scope>
</reference>
<reference key="38">
    <citation type="journal article" date="2017" name="FEBS Lett.">
        <title>An in vivo proteomic analysis of the Me31B interactome in Drosophila germ granules.</title>
        <authorList>
            <person name="DeHaan H."/>
            <person name="McCambridge A."/>
            <person name="Armstrong B."/>
            <person name="Cruse C."/>
            <person name="Solanki D."/>
            <person name="Trinidad J.C."/>
            <person name="Arkov A.L."/>
            <person name="Gao M."/>
        </authorList>
    </citation>
    <scope>INTERACTION WITH ME31B</scope>
    <scope>SUBCELLULAR LOCATION</scope>
</reference>
<reference evidence="61 63" key="39">
    <citation type="journal article" date="2010" name="Genes Dev.">
        <title>Structural basis for methylarginine-dependent recognition of Aubergine by Tudor.</title>
        <authorList>
            <person name="Liu H."/>
            <person name="Wang J.Y."/>
            <person name="Huang Y."/>
            <person name="Li Z."/>
            <person name="Gong W."/>
            <person name="Lehmann R."/>
            <person name="Xu R.M."/>
        </authorList>
    </citation>
    <scope>X-RAY CRYSTALLOGRAPHY (2.80 ANGSTROMS) OF 6-18 IN COMPLEX WITH TUD</scope>
    <scope>SUBCELLULAR LOCATION</scope>
    <scope>TISSUE SPECIFICITY</scope>
    <scope>METHYLATION AT ARG-11; ARG-13 AND ARG-15</scope>
</reference>
<reference evidence="64" key="40">
    <citation type="journal article" date="2021" name="Nat. Commun.">
        <title>Binding of guide piRNA triggers methylation of the unstructured N-terminal region of Aub leading to assembly of the piRNA amplification complex.</title>
        <authorList>
            <person name="Huang X."/>
            <person name="Hu H."/>
            <person name="Webster A."/>
            <person name="Zou F."/>
            <person name="Du J."/>
            <person name="Patel D.J."/>
            <person name="Sachidanandam R."/>
            <person name="Toth K.F."/>
            <person name="Aravin A.A."/>
            <person name="Li S."/>
        </authorList>
    </citation>
    <scope>X-RAY CRYSTALLOGRAPHY (2.70 ANGSTROMS) OF 6-18</scope>
    <scope>FUNCTION</scope>
    <scope>CATALYTIC ACTIVITY</scope>
    <scope>INTERACTION WITH CSUL; KRIMP AND AGO3</scope>
    <scope>SUBCELLULAR LOCATION</scope>
    <scope>METHYLATION</scope>
    <scope>CHARACTERIZATION OF MUTAGENS 11-ARG--ARG-26 AND 568-TYR--LYS-572</scope>
    <scope>MUTAGENESIS OF 345-TYR-TYR-346</scope>
</reference>
<proteinExistence type="evidence at protein level"/>
<name>AUB_DROME</name>
<dbReference type="EC" id="3.1.26.-" evidence="15 19 38"/>
<dbReference type="EMBL" id="X94613">
    <property type="protein sequence ID" value="CAA64320.1"/>
    <property type="molecule type" value="Genomic_DNA"/>
</dbReference>
<dbReference type="EMBL" id="KC116210">
    <property type="protein sequence ID" value="AGA18939.1"/>
    <property type="molecule type" value="Genomic_DNA"/>
</dbReference>
<dbReference type="EMBL" id="KC116211">
    <property type="protein sequence ID" value="AGA18940.1"/>
    <property type="molecule type" value="Genomic_DNA"/>
</dbReference>
<dbReference type="EMBL" id="KC116212">
    <property type="protein sequence ID" value="AGA18941.1"/>
    <property type="molecule type" value="Genomic_DNA"/>
</dbReference>
<dbReference type="EMBL" id="KC116213">
    <property type="protein sequence ID" value="AGA18942.1"/>
    <property type="molecule type" value="Genomic_DNA"/>
</dbReference>
<dbReference type="EMBL" id="KC116214">
    <property type="protein sequence ID" value="AGA18943.1"/>
    <property type="molecule type" value="Genomic_DNA"/>
</dbReference>
<dbReference type="EMBL" id="KC116215">
    <property type="protein sequence ID" value="AGA18944.1"/>
    <property type="molecule type" value="Genomic_DNA"/>
</dbReference>
<dbReference type="EMBL" id="KC116216">
    <property type="protein sequence ID" value="AGA18945.1"/>
    <property type="molecule type" value="Genomic_DNA"/>
</dbReference>
<dbReference type="EMBL" id="KC116217">
    <property type="protein sequence ID" value="AGA18946.1"/>
    <property type="molecule type" value="Genomic_DNA"/>
</dbReference>
<dbReference type="EMBL" id="AE014134">
    <property type="protein sequence ID" value="AAF53046.1"/>
    <property type="molecule type" value="Genomic_DNA"/>
</dbReference>
<dbReference type="EMBL" id="AE014134">
    <property type="protein sequence ID" value="ABV53667.1"/>
    <property type="molecule type" value="Genomic_DNA"/>
</dbReference>
<dbReference type="EMBL" id="AF145680">
    <property type="protein sequence ID" value="AAD38655.1"/>
    <property type="molecule type" value="mRNA"/>
</dbReference>
<dbReference type="EMBL" id="JX656893">
    <property type="protein sequence ID" value="AFX62833.1"/>
    <property type="molecule type" value="mRNA"/>
</dbReference>
<dbReference type="EMBL" id="JX656894">
    <property type="protein sequence ID" value="AFX62834.1"/>
    <property type="molecule type" value="mRNA"/>
</dbReference>
<dbReference type="EMBL" id="JX656895">
    <property type="protein sequence ID" value="AFX62835.1"/>
    <property type="molecule type" value="mRNA"/>
</dbReference>
<dbReference type="RefSeq" id="NP_001097144.1">
    <molecule id="O76922-2"/>
    <property type="nucleotide sequence ID" value="NM_001103674.3"/>
</dbReference>
<dbReference type="RefSeq" id="NP_476734.1">
    <molecule id="O76922-1"/>
    <property type="nucleotide sequence ID" value="NM_057386.5"/>
</dbReference>
<dbReference type="PDB" id="3NTH">
    <property type="method" value="X-ray"/>
    <property type="resolution" value="2.80 A"/>
    <property type="chains" value="C=10-15"/>
</dbReference>
<dbReference type="PDB" id="3NTI">
    <property type="method" value="X-ray"/>
    <property type="resolution" value="2.80 A"/>
    <property type="chains" value="C=6-18"/>
</dbReference>
<dbReference type="PDB" id="7CFD">
    <property type="method" value="X-ray"/>
    <property type="resolution" value="2.70 A"/>
    <property type="chains" value="I/J/K/L/M/N/O/Z=6-18"/>
</dbReference>
<dbReference type="PDBsum" id="3NTH"/>
<dbReference type="PDBsum" id="3NTI"/>
<dbReference type="PDBsum" id="7CFD"/>
<dbReference type="SMR" id="O76922"/>
<dbReference type="BioGRID" id="60589">
    <property type="interactions" value="77"/>
</dbReference>
<dbReference type="ComplexPortal" id="CPX-3181">
    <property type="entry name" value="aubergine-tudor complex"/>
</dbReference>
<dbReference type="FunCoup" id="O76922">
    <property type="interactions" value="17"/>
</dbReference>
<dbReference type="IntAct" id="O76922">
    <property type="interactions" value="17"/>
</dbReference>
<dbReference type="MINT" id="O76922"/>
<dbReference type="STRING" id="7227.FBpp0079754"/>
<dbReference type="iPTMnet" id="O76922"/>
<dbReference type="PaxDb" id="7227-FBpp0079754"/>
<dbReference type="EnsemblMetazoa" id="FBtr0080165">
    <molecule id="O76922-1"/>
    <property type="protein sequence ID" value="FBpp0079754"/>
    <property type="gene ID" value="FBgn0000146"/>
</dbReference>
<dbReference type="EnsemblMetazoa" id="FBtr0112793">
    <molecule id="O76922-2"/>
    <property type="protein sequence ID" value="FBpp0111705"/>
    <property type="gene ID" value="FBgn0000146"/>
</dbReference>
<dbReference type="GeneID" id="34524"/>
<dbReference type="KEGG" id="dme:Dmel_CG6137"/>
<dbReference type="UCSC" id="CG6137-RA">
    <molecule id="O76922-1"/>
    <property type="organism name" value="d. melanogaster"/>
</dbReference>
<dbReference type="UCSC" id="CG6137-RC">
    <property type="organism name" value="d. melanogaster"/>
</dbReference>
<dbReference type="AGR" id="FB:FBgn0000146"/>
<dbReference type="CTD" id="34524"/>
<dbReference type="FlyBase" id="FBgn0000146">
    <property type="gene designation" value="aub"/>
</dbReference>
<dbReference type="VEuPathDB" id="VectorBase:FBgn0000146"/>
<dbReference type="eggNOG" id="KOG1042">
    <property type="taxonomic scope" value="Eukaryota"/>
</dbReference>
<dbReference type="GeneTree" id="ENSGT00950000183200"/>
<dbReference type="InParanoid" id="O76922"/>
<dbReference type="OMA" id="WSGTCRV"/>
<dbReference type="OrthoDB" id="445936at2759"/>
<dbReference type="PhylomeDB" id="O76922"/>
<dbReference type="SignaLink" id="O76922"/>
<dbReference type="BioGRID-ORCS" id="34524">
    <property type="hits" value="0 hits in 3 CRISPR screens"/>
</dbReference>
<dbReference type="CD-CODE" id="A6E1D014">
    <property type="entry name" value="P-body"/>
</dbReference>
<dbReference type="EvolutionaryTrace" id="O76922"/>
<dbReference type="GenomeRNAi" id="34524"/>
<dbReference type="PRO" id="PR:O76922"/>
<dbReference type="Proteomes" id="UP000000803">
    <property type="component" value="Chromosome 2L"/>
</dbReference>
<dbReference type="Bgee" id="FBgn0000146">
    <property type="expression patterns" value="Expressed in spermatogonium in testis and 35 other cell types or tissues"/>
</dbReference>
<dbReference type="ExpressionAtlas" id="O76922">
    <property type="expression patterns" value="baseline and differential"/>
</dbReference>
<dbReference type="GO" id="GO:0005737">
    <property type="term" value="C:cytoplasm"/>
    <property type="evidence" value="ECO:0000314"/>
    <property type="project" value="FlyBase"/>
</dbReference>
<dbReference type="GO" id="GO:0005829">
    <property type="term" value="C:cytosol"/>
    <property type="evidence" value="ECO:0007669"/>
    <property type="project" value="UniProtKB-SubCell"/>
</dbReference>
<dbReference type="GO" id="GO:0005634">
    <property type="term" value="C:nucleus"/>
    <property type="evidence" value="ECO:0000318"/>
    <property type="project" value="GO_Central"/>
</dbReference>
<dbReference type="GO" id="GO:0043186">
    <property type="term" value="C:P granule"/>
    <property type="evidence" value="ECO:0000314"/>
    <property type="project" value="UniProtKB"/>
</dbReference>
<dbReference type="GO" id="GO:0048471">
    <property type="term" value="C:perinuclear region of cytoplasm"/>
    <property type="evidence" value="ECO:0007669"/>
    <property type="project" value="UniProtKB-SubCell"/>
</dbReference>
<dbReference type="GO" id="GO:0003729">
    <property type="term" value="F:mRNA binding"/>
    <property type="evidence" value="ECO:0000269"/>
    <property type="project" value="FlyBase"/>
</dbReference>
<dbReference type="GO" id="GO:0034584">
    <property type="term" value="F:piRNA binding"/>
    <property type="evidence" value="ECO:0000314"/>
    <property type="project" value="FlyBase"/>
</dbReference>
<dbReference type="GO" id="GO:0004521">
    <property type="term" value="F:RNA endonuclease activity"/>
    <property type="evidence" value="ECO:0000315"/>
    <property type="project" value="FlyBase"/>
</dbReference>
<dbReference type="GO" id="GO:0016891">
    <property type="term" value="F:RNA endonuclease activity, producing 5'-phosphomonoesters"/>
    <property type="evidence" value="ECO:0000314"/>
    <property type="project" value="FlyBase"/>
</dbReference>
<dbReference type="GO" id="GO:0050829">
    <property type="term" value="P:defense response to Gram-negative bacterium"/>
    <property type="evidence" value="ECO:0007001"/>
    <property type="project" value="FlyBase"/>
</dbReference>
<dbReference type="GO" id="GO:0046843">
    <property type="term" value="P:dorsal appendage formation"/>
    <property type="evidence" value="ECO:0000315"/>
    <property type="project" value="FlyBase"/>
</dbReference>
<dbReference type="GO" id="GO:0098795">
    <property type="term" value="P:global gene silencing by mRNA cleavage"/>
    <property type="evidence" value="ECO:0000315"/>
    <property type="project" value="FlyBase"/>
</dbReference>
<dbReference type="GO" id="GO:0031507">
    <property type="term" value="P:heterochromatin formation"/>
    <property type="evidence" value="ECO:0000315"/>
    <property type="project" value="FlyBase"/>
</dbReference>
<dbReference type="GO" id="GO:0046594">
    <property type="term" value="P:maintenance of pole plasm mRNA location"/>
    <property type="evidence" value="ECO:0000304"/>
    <property type="project" value="FlyBase"/>
</dbReference>
<dbReference type="GO" id="GO:0141065">
    <property type="term" value="P:maternal mRNA clearance"/>
    <property type="evidence" value="ECO:0000315"/>
    <property type="project" value="FlyBase"/>
</dbReference>
<dbReference type="GO" id="GO:0007076">
    <property type="term" value="P:mitotic chromosome condensation"/>
    <property type="evidence" value="ECO:0000315"/>
    <property type="project" value="FlyBase"/>
</dbReference>
<dbReference type="GO" id="GO:0030717">
    <property type="term" value="P:oocyte karyosome formation"/>
    <property type="evidence" value="ECO:0000304"/>
    <property type="project" value="FlyBase"/>
</dbReference>
<dbReference type="GO" id="GO:0001556">
    <property type="term" value="P:oocyte maturation"/>
    <property type="evidence" value="ECO:0000315"/>
    <property type="project" value="FlyBase"/>
</dbReference>
<dbReference type="GO" id="GO:0048477">
    <property type="term" value="P:oogenesis"/>
    <property type="evidence" value="ECO:0000314"/>
    <property type="project" value="ComplexPortal"/>
</dbReference>
<dbReference type="GO" id="GO:1903863">
    <property type="term" value="P:P granule assembly"/>
    <property type="evidence" value="ECO:0000314"/>
    <property type="project" value="ComplexPortal"/>
</dbReference>
<dbReference type="GO" id="GO:0034587">
    <property type="term" value="P:piRNA processing"/>
    <property type="evidence" value="ECO:0000315"/>
    <property type="project" value="FlyBase"/>
</dbReference>
<dbReference type="GO" id="GO:0140991">
    <property type="term" value="P:piRNA-mediated gene silencing by mRNA destabilization"/>
    <property type="evidence" value="ECO:0000314"/>
    <property type="project" value="FlyBase"/>
</dbReference>
<dbReference type="GO" id="GO:0007277">
    <property type="term" value="P:pole cell development"/>
    <property type="evidence" value="ECO:0000314"/>
    <property type="project" value="ComplexPortal"/>
</dbReference>
<dbReference type="GO" id="GO:0007279">
    <property type="term" value="P:pole cell formation"/>
    <property type="evidence" value="ECO:0000314"/>
    <property type="project" value="ComplexPortal"/>
</dbReference>
<dbReference type="GO" id="GO:0007315">
    <property type="term" value="P:pole plasm assembly"/>
    <property type="evidence" value="ECO:0000315"/>
    <property type="project" value="FlyBase"/>
</dbReference>
<dbReference type="GO" id="GO:0007318">
    <property type="term" value="P:pole plasm protein localization"/>
    <property type="evidence" value="ECO:0000315"/>
    <property type="project" value="FlyBase"/>
</dbReference>
<dbReference type="GO" id="GO:1904690">
    <property type="term" value="P:positive regulation of cytoplasmic translational initiation"/>
    <property type="evidence" value="ECO:0000269"/>
    <property type="project" value="FlyBase"/>
</dbReference>
<dbReference type="GO" id="GO:0045089">
    <property type="term" value="P:positive regulation of innate immune response"/>
    <property type="evidence" value="ECO:0007001"/>
    <property type="project" value="FlyBase"/>
</dbReference>
<dbReference type="GO" id="GO:0046012">
    <property type="term" value="P:positive regulation of oskar mRNA translation"/>
    <property type="evidence" value="ECO:0000303"/>
    <property type="project" value="FlyBase"/>
</dbReference>
<dbReference type="GO" id="GO:1900370">
    <property type="term" value="P:positive regulation of post-transcriptional gene silencing by RNA"/>
    <property type="evidence" value="ECO:0000314"/>
    <property type="project" value="ComplexPortal"/>
</dbReference>
<dbReference type="GO" id="GO:0046011">
    <property type="term" value="P:regulation of oskar mRNA translation"/>
    <property type="evidence" value="ECO:0000304"/>
    <property type="project" value="FlyBase"/>
</dbReference>
<dbReference type="GO" id="GO:0007317">
    <property type="term" value="P:regulation of pole plasm oskar mRNA localization"/>
    <property type="evidence" value="ECO:0000315"/>
    <property type="project" value="FlyBase"/>
</dbReference>
<dbReference type="GO" id="GO:0031047">
    <property type="term" value="P:regulatory ncRNA-mediated gene silencing"/>
    <property type="evidence" value="ECO:0000318"/>
    <property type="project" value="GO_Central"/>
</dbReference>
<dbReference type="GO" id="GO:0035194">
    <property type="term" value="P:regulatory ncRNA-mediated post-transcriptional gene silencing"/>
    <property type="evidence" value="ECO:0000315"/>
    <property type="project" value="FlyBase"/>
</dbReference>
<dbReference type="GO" id="GO:0140965">
    <property type="term" value="P:secondary piRNA processing"/>
    <property type="evidence" value="ECO:0000315"/>
    <property type="project" value="FlyBase"/>
</dbReference>
<dbReference type="GO" id="GO:0035282">
    <property type="term" value="P:segmentation"/>
    <property type="evidence" value="ECO:0000316"/>
    <property type="project" value="FlyBase"/>
</dbReference>
<dbReference type="GO" id="GO:0007283">
    <property type="term" value="P:spermatogenesis"/>
    <property type="evidence" value="ECO:0000318"/>
    <property type="project" value="GO_Central"/>
</dbReference>
<dbReference type="GO" id="GO:0010526">
    <property type="term" value="P:transposable element silencing"/>
    <property type="evidence" value="ECO:0000315"/>
    <property type="project" value="FlyBase"/>
</dbReference>
<dbReference type="GO" id="GO:0141008">
    <property type="term" value="P:transposable element silencing by mRNA destabilization"/>
    <property type="evidence" value="ECO:0000305"/>
    <property type="project" value="FlyBase"/>
</dbReference>
<dbReference type="GO" id="GO:0141009">
    <property type="term" value="P:transposable element silencing by piRNA-mediated mRNA destabilization"/>
    <property type="evidence" value="ECO:0000315"/>
    <property type="project" value="FlyBase"/>
</dbReference>
<dbReference type="CDD" id="cd02845">
    <property type="entry name" value="PAZ_piwi_like"/>
    <property type="match status" value="1"/>
</dbReference>
<dbReference type="CDD" id="cd04658">
    <property type="entry name" value="Piwi_piwi-like_Euk"/>
    <property type="match status" value="1"/>
</dbReference>
<dbReference type="FunFam" id="3.40.50.2300:FF:000404">
    <property type="entry name" value="Argonaut-like protein"/>
    <property type="match status" value="1"/>
</dbReference>
<dbReference type="FunFam" id="3.30.420.10:FF:000014">
    <property type="entry name" value="Piwi-like RNA-mediated gene silencing 1"/>
    <property type="match status" value="1"/>
</dbReference>
<dbReference type="FunFam" id="2.170.260.10:FF:000003">
    <property type="entry name" value="Piwi-like RNA-mediated gene silencing 2"/>
    <property type="match status" value="1"/>
</dbReference>
<dbReference type="Gene3D" id="3.40.50.2300">
    <property type="match status" value="1"/>
</dbReference>
<dbReference type="Gene3D" id="2.170.260.10">
    <property type="entry name" value="paz domain"/>
    <property type="match status" value="1"/>
</dbReference>
<dbReference type="Gene3D" id="3.30.420.10">
    <property type="entry name" value="Ribonuclease H-like superfamily/Ribonuclease H"/>
    <property type="match status" value="1"/>
</dbReference>
<dbReference type="InterPro" id="IPR003100">
    <property type="entry name" value="PAZ_dom"/>
</dbReference>
<dbReference type="InterPro" id="IPR036085">
    <property type="entry name" value="PAZ_dom_sf"/>
</dbReference>
<dbReference type="InterPro" id="IPR003165">
    <property type="entry name" value="Piwi"/>
</dbReference>
<dbReference type="InterPro" id="IPR012337">
    <property type="entry name" value="RNaseH-like_sf"/>
</dbReference>
<dbReference type="InterPro" id="IPR036397">
    <property type="entry name" value="RNaseH_sf"/>
</dbReference>
<dbReference type="PANTHER" id="PTHR22891">
    <property type="entry name" value="EUKARYOTIC TRANSLATION INITIATION FACTOR 2C"/>
    <property type="match status" value="1"/>
</dbReference>
<dbReference type="Pfam" id="PF02170">
    <property type="entry name" value="PAZ"/>
    <property type="match status" value="1"/>
</dbReference>
<dbReference type="Pfam" id="PF02171">
    <property type="entry name" value="Piwi"/>
    <property type="match status" value="1"/>
</dbReference>
<dbReference type="SMART" id="SM00949">
    <property type="entry name" value="PAZ"/>
    <property type="match status" value="1"/>
</dbReference>
<dbReference type="SMART" id="SM00950">
    <property type="entry name" value="Piwi"/>
    <property type="match status" value="1"/>
</dbReference>
<dbReference type="SUPFAM" id="SSF101690">
    <property type="entry name" value="PAZ domain"/>
    <property type="match status" value="1"/>
</dbReference>
<dbReference type="SUPFAM" id="SSF53098">
    <property type="entry name" value="Ribonuclease H-like"/>
    <property type="match status" value="1"/>
</dbReference>
<dbReference type="PROSITE" id="PS50821">
    <property type="entry name" value="PAZ"/>
    <property type="match status" value="1"/>
</dbReference>
<dbReference type="PROSITE" id="PS50822">
    <property type="entry name" value="PIWI"/>
    <property type="match status" value="1"/>
</dbReference>